<keyword id="KW-0012">Acyltransferase</keyword>
<keyword id="KW-0449">Lipoprotein</keyword>
<keyword id="KW-0472">Membrane</keyword>
<keyword id="KW-0564">Palmitate</keyword>
<keyword id="KW-1185">Reference proteome</keyword>
<keyword id="KW-0808">Transferase</keyword>
<keyword id="KW-0812">Transmembrane</keyword>
<keyword id="KW-1133">Transmembrane helix</keyword>
<keyword id="KW-0926">Vacuole</keyword>
<protein>
    <recommendedName>
        <fullName>Palmitoyltransferase pfa3</fullName>
        <ecNumber>2.3.1.225</ecNumber>
    </recommendedName>
    <alternativeName>
        <fullName>Protein fatty acyltransferase 3</fullName>
    </alternativeName>
</protein>
<organism>
    <name type="scientific">Emericella nidulans (strain FGSC A4 / ATCC 38163 / CBS 112.46 / NRRL 194 / M139)</name>
    <name type="common">Aspergillus nidulans</name>
    <dbReference type="NCBI Taxonomy" id="227321"/>
    <lineage>
        <taxon>Eukaryota</taxon>
        <taxon>Fungi</taxon>
        <taxon>Dikarya</taxon>
        <taxon>Ascomycota</taxon>
        <taxon>Pezizomycotina</taxon>
        <taxon>Eurotiomycetes</taxon>
        <taxon>Eurotiomycetidae</taxon>
        <taxon>Eurotiales</taxon>
        <taxon>Aspergillaceae</taxon>
        <taxon>Aspergillus</taxon>
        <taxon>Aspergillus subgen. Nidulantes</taxon>
    </lineage>
</organism>
<comment type="function">
    <text evidence="1">Palmitoyltransferase specific for VAC8. Palmitoylates VAC8 at one or more of its N-terminal cysteine residues, which is required for its proper membrane localization (By similarity).</text>
</comment>
<comment type="catalytic activity">
    <reaction>
        <text>L-cysteinyl-[protein] + hexadecanoyl-CoA = S-hexadecanoyl-L-cysteinyl-[protein] + CoA</text>
        <dbReference type="Rhea" id="RHEA:36683"/>
        <dbReference type="Rhea" id="RHEA-COMP:10131"/>
        <dbReference type="Rhea" id="RHEA-COMP:11032"/>
        <dbReference type="ChEBI" id="CHEBI:29950"/>
        <dbReference type="ChEBI" id="CHEBI:57287"/>
        <dbReference type="ChEBI" id="CHEBI:57379"/>
        <dbReference type="ChEBI" id="CHEBI:74151"/>
        <dbReference type="EC" id="2.3.1.225"/>
    </reaction>
</comment>
<comment type="subcellular location">
    <subcellularLocation>
        <location evidence="1">Vacuole membrane</location>
        <topology evidence="1">Multi-pass membrane protein</topology>
    </subcellularLocation>
</comment>
<comment type="domain">
    <text evidence="1">The DHHC domain is required for palmitoyltransferase activity.</text>
</comment>
<comment type="PTM">
    <text evidence="1">Autopalmitoylated.</text>
</comment>
<comment type="similarity">
    <text evidence="5">Belongs to the DHHC palmitoyltransferase family. PFA3 subfamily.</text>
</comment>
<comment type="sequence caution" evidence="5">
    <conflict type="erroneous gene model prediction">
        <sequence resource="EMBL-CDS" id="CBF78589"/>
    </conflict>
</comment>
<comment type="sequence caution" evidence="5">
    <conflict type="erroneous gene model prediction">
        <sequence resource="EMBL-CDS" id="EAA61708"/>
    </conflict>
    <text>The predicted gene AN7337 has been split into 2 genes: AN10929 and AN10934.</text>
</comment>
<proteinExistence type="inferred from homology"/>
<sequence length="514" mass="57997">MATLAMSTPSSPTWPKRRPKAWAMRCERYCCAAASYFPLAFVYSLTTWAVYVEASVGLKPSSSSWIGLPSSILGVVLYLALNISYTTAVFTDPGSPLGARSGGGHPYSALPITELPEYTSYTVNSTGGSRFCKKCQCPKPDRAHHCSTCKRCVLKMDHHCPWLATCVGLRNYKAFLLFLIYTSLFCWVDFGVSAIWIWTEVFNDTRYMDGILPVNVVLLSILGGIIGLVLTGFTAWHISLATRGLTTIECLEKTRYVSPLRKALDRHRYDGLLGTNTGGENQDTFGSRLQNYGNQILDAHANAIPGVTRPEEGEESSDNLTPAQQALSRSYADLERQREHDRYEDYLAELDNEKMPHAFDLGWKRNLLHLFGDRPLHWLVPTPTTTGNGWEWEPSRKFLEAQERVRQQREQVAEQQRQHQRDLYLRNMNNSRAWLGNELPPGWTPDQPLSHSDDVARPATGVSMKTLAPRSPRPRPGEEVYAEDLDKDDFVLEPTRGKGSGNQSSREDDWRDWD</sequence>
<reference key="1">
    <citation type="journal article" date="2005" name="Nature">
        <title>Sequencing of Aspergillus nidulans and comparative analysis with A. fumigatus and A. oryzae.</title>
        <authorList>
            <person name="Galagan J.E."/>
            <person name="Calvo S.E."/>
            <person name="Cuomo C."/>
            <person name="Ma L.-J."/>
            <person name="Wortman J.R."/>
            <person name="Batzoglou S."/>
            <person name="Lee S.-I."/>
            <person name="Bastuerkmen M."/>
            <person name="Spevak C.C."/>
            <person name="Clutterbuck J."/>
            <person name="Kapitonov V."/>
            <person name="Jurka J."/>
            <person name="Scazzocchio C."/>
            <person name="Farman M.L."/>
            <person name="Butler J."/>
            <person name="Purcell S."/>
            <person name="Harris S."/>
            <person name="Braus G.H."/>
            <person name="Draht O."/>
            <person name="Busch S."/>
            <person name="D'Enfert C."/>
            <person name="Bouchier C."/>
            <person name="Goldman G.H."/>
            <person name="Bell-Pedersen D."/>
            <person name="Griffiths-Jones S."/>
            <person name="Doonan J.H."/>
            <person name="Yu J."/>
            <person name="Vienken K."/>
            <person name="Pain A."/>
            <person name="Freitag M."/>
            <person name="Selker E.U."/>
            <person name="Archer D.B."/>
            <person name="Penalva M.A."/>
            <person name="Oakley B.R."/>
            <person name="Momany M."/>
            <person name="Tanaka T."/>
            <person name="Kumagai T."/>
            <person name="Asai K."/>
            <person name="Machida M."/>
            <person name="Nierman W.C."/>
            <person name="Denning D.W."/>
            <person name="Caddick M.X."/>
            <person name="Hynes M."/>
            <person name="Paoletti M."/>
            <person name="Fischer R."/>
            <person name="Miller B.L."/>
            <person name="Dyer P.S."/>
            <person name="Sachs M.S."/>
            <person name="Osmani S.A."/>
            <person name="Birren B.W."/>
        </authorList>
    </citation>
    <scope>NUCLEOTIDE SEQUENCE [LARGE SCALE GENOMIC DNA]</scope>
    <source>
        <strain>FGSC A4 / ATCC 38163 / CBS 112.46 / NRRL 194 / M139</strain>
    </source>
</reference>
<reference key="2">
    <citation type="journal article" date="2009" name="Fungal Genet. Biol.">
        <title>The 2008 update of the Aspergillus nidulans genome annotation: a community effort.</title>
        <authorList>
            <person name="Wortman J.R."/>
            <person name="Gilsenan J.M."/>
            <person name="Joardar V."/>
            <person name="Deegan J."/>
            <person name="Clutterbuck J."/>
            <person name="Andersen M.R."/>
            <person name="Archer D."/>
            <person name="Bencina M."/>
            <person name="Braus G."/>
            <person name="Coutinho P."/>
            <person name="von Dohren H."/>
            <person name="Doonan J."/>
            <person name="Driessen A.J."/>
            <person name="Durek P."/>
            <person name="Espeso E."/>
            <person name="Fekete E."/>
            <person name="Flipphi M."/>
            <person name="Estrada C.G."/>
            <person name="Geysens S."/>
            <person name="Goldman G."/>
            <person name="de Groot P.W."/>
            <person name="Hansen K."/>
            <person name="Harris S.D."/>
            <person name="Heinekamp T."/>
            <person name="Helmstaedt K."/>
            <person name="Henrissat B."/>
            <person name="Hofmann G."/>
            <person name="Homan T."/>
            <person name="Horio T."/>
            <person name="Horiuchi H."/>
            <person name="James S."/>
            <person name="Jones M."/>
            <person name="Karaffa L."/>
            <person name="Karanyi Z."/>
            <person name="Kato M."/>
            <person name="Keller N."/>
            <person name="Kelly D.E."/>
            <person name="Kiel J.A."/>
            <person name="Kim J.M."/>
            <person name="van der Klei I.J."/>
            <person name="Klis F.M."/>
            <person name="Kovalchuk A."/>
            <person name="Krasevec N."/>
            <person name="Kubicek C.P."/>
            <person name="Liu B."/>
            <person name="Maccabe A."/>
            <person name="Meyer V."/>
            <person name="Mirabito P."/>
            <person name="Miskei M."/>
            <person name="Mos M."/>
            <person name="Mullins J."/>
            <person name="Nelson D.R."/>
            <person name="Nielsen J."/>
            <person name="Oakley B.R."/>
            <person name="Osmani S.A."/>
            <person name="Pakula T."/>
            <person name="Paszewski A."/>
            <person name="Paulsen I."/>
            <person name="Pilsyk S."/>
            <person name="Pocsi I."/>
            <person name="Punt P.J."/>
            <person name="Ram A.F."/>
            <person name="Ren Q."/>
            <person name="Robellet X."/>
            <person name="Robson G."/>
            <person name="Seiboth B."/>
            <person name="van Solingen P."/>
            <person name="Specht T."/>
            <person name="Sun J."/>
            <person name="Taheri-Talesh N."/>
            <person name="Takeshita N."/>
            <person name="Ussery D."/>
            <person name="vanKuyk P.A."/>
            <person name="Visser H."/>
            <person name="van de Vondervoort P.J."/>
            <person name="de Vries R.P."/>
            <person name="Walton J."/>
            <person name="Xiang X."/>
            <person name="Xiong Y."/>
            <person name="Zeng A.P."/>
            <person name="Brandt B.W."/>
            <person name="Cornell M.J."/>
            <person name="van den Hondel C.A."/>
            <person name="Visser J."/>
            <person name="Oliver S.G."/>
            <person name="Turner G."/>
        </authorList>
    </citation>
    <scope>GENOME REANNOTATION</scope>
    <source>
        <strain>FGSC A4 / ATCC 38163 / CBS 112.46 / NRRL 194 / M139</strain>
    </source>
</reference>
<evidence type="ECO:0000250" key="1"/>
<evidence type="ECO:0000255" key="2"/>
<evidence type="ECO:0000255" key="3">
    <source>
        <dbReference type="PROSITE-ProRule" id="PRU00067"/>
    </source>
</evidence>
<evidence type="ECO:0000256" key="4">
    <source>
        <dbReference type="SAM" id="MobiDB-lite"/>
    </source>
</evidence>
<evidence type="ECO:0000305" key="5"/>
<name>PFA3_EMENI</name>
<feature type="chain" id="PRO_0000212954" description="Palmitoyltransferase pfa3">
    <location>
        <begin position="1"/>
        <end position="514"/>
    </location>
</feature>
<feature type="topological domain" description="Cytoplasmic" evidence="2">
    <location>
        <begin position="1"/>
        <end position="31"/>
    </location>
</feature>
<feature type="transmembrane region" description="Helical" evidence="2">
    <location>
        <begin position="32"/>
        <end position="52"/>
    </location>
</feature>
<feature type="topological domain" description="Lumenal" evidence="2">
    <location>
        <begin position="53"/>
        <end position="64"/>
    </location>
</feature>
<feature type="transmembrane region" description="Helical" evidence="2">
    <location>
        <begin position="65"/>
        <end position="85"/>
    </location>
</feature>
<feature type="topological domain" description="Cytoplasmic" evidence="2">
    <location>
        <begin position="86"/>
        <end position="174"/>
    </location>
</feature>
<feature type="transmembrane region" description="Helical" evidence="2">
    <location>
        <begin position="175"/>
        <end position="195"/>
    </location>
</feature>
<feature type="topological domain" description="Lumenal" evidence="2">
    <location>
        <begin position="196"/>
        <end position="209"/>
    </location>
</feature>
<feature type="transmembrane region" description="Helical" evidence="2">
    <location>
        <begin position="210"/>
        <end position="230"/>
    </location>
</feature>
<feature type="topological domain" description="Cytoplasmic" evidence="2">
    <location>
        <begin position="231"/>
        <end position="514"/>
    </location>
</feature>
<feature type="domain" description="DHHC" evidence="3">
    <location>
        <begin position="130"/>
        <end position="180"/>
    </location>
</feature>
<feature type="region of interest" description="Disordered" evidence="4">
    <location>
        <begin position="307"/>
        <end position="336"/>
    </location>
</feature>
<feature type="region of interest" description="Disordered" evidence="4">
    <location>
        <begin position="436"/>
        <end position="514"/>
    </location>
</feature>
<feature type="compositionally biased region" description="Polar residues" evidence="4">
    <location>
        <begin position="318"/>
        <end position="328"/>
    </location>
</feature>
<feature type="compositionally biased region" description="Basic and acidic residues" evidence="4">
    <location>
        <begin position="505"/>
        <end position="514"/>
    </location>
</feature>
<gene>
    <name type="primary">pfa3</name>
    <name type="ORF">AN10934</name>
</gene>
<accession>C8VCL4</accession>
<accession>Q5AWJ3</accession>
<dbReference type="EC" id="2.3.1.225"/>
<dbReference type="EMBL" id="AACD01000128">
    <property type="protein sequence ID" value="EAA61708.1"/>
    <property type="status" value="ALT_SEQ"/>
    <property type="molecule type" value="Genomic_DNA"/>
</dbReference>
<dbReference type="EMBL" id="BN001304">
    <property type="protein sequence ID" value="CBF78589.1"/>
    <property type="status" value="ALT_SEQ"/>
    <property type="molecule type" value="Genomic_DNA"/>
</dbReference>
<dbReference type="FunCoup" id="C8VCL4">
    <property type="interactions" value="433"/>
</dbReference>
<dbReference type="STRING" id="227321.C8VCL4"/>
<dbReference type="eggNOG" id="KOG1315">
    <property type="taxonomic scope" value="Eukaryota"/>
</dbReference>
<dbReference type="HOGENOM" id="CLU_010291_0_0_1"/>
<dbReference type="InParanoid" id="C8VCL4"/>
<dbReference type="Proteomes" id="UP000000560">
    <property type="component" value="Chromosome IV"/>
</dbReference>
<dbReference type="GO" id="GO:0005783">
    <property type="term" value="C:endoplasmic reticulum"/>
    <property type="evidence" value="ECO:0000318"/>
    <property type="project" value="GO_Central"/>
</dbReference>
<dbReference type="GO" id="GO:0005794">
    <property type="term" value="C:Golgi apparatus"/>
    <property type="evidence" value="ECO:0000318"/>
    <property type="project" value="GO_Central"/>
</dbReference>
<dbReference type="GO" id="GO:0005774">
    <property type="term" value="C:vacuolar membrane"/>
    <property type="evidence" value="ECO:0007669"/>
    <property type="project" value="UniProtKB-SubCell"/>
</dbReference>
<dbReference type="GO" id="GO:0019706">
    <property type="term" value="F:protein-cysteine S-palmitoyltransferase activity"/>
    <property type="evidence" value="ECO:0000318"/>
    <property type="project" value="GO_Central"/>
</dbReference>
<dbReference type="GO" id="GO:0006612">
    <property type="term" value="P:protein targeting to membrane"/>
    <property type="evidence" value="ECO:0000318"/>
    <property type="project" value="GO_Central"/>
</dbReference>
<dbReference type="InterPro" id="IPR001594">
    <property type="entry name" value="Palmitoyltrfase_DHHC"/>
</dbReference>
<dbReference type="InterPro" id="IPR039859">
    <property type="entry name" value="PFA4/ZDH16/20/ERF2-like"/>
</dbReference>
<dbReference type="PANTHER" id="PTHR12246">
    <property type="entry name" value="PALMITOYLTRANSFERASE ZDHHC16"/>
    <property type="match status" value="1"/>
</dbReference>
<dbReference type="Pfam" id="PF01529">
    <property type="entry name" value="DHHC"/>
    <property type="match status" value="1"/>
</dbReference>
<dbReference type="PROSITE" id="PS50216">
    <property type="entry name" value="DHHC"/>
    <property type="match status" value="1"/>
</dbReference>